<comment type="function">
    <text evidence="1">Toxic component of a type II toxin-antitoxin (TA) system. An RNase. Its toxic effect is neutralized by coexpression with cognate antitoxin VapB31 (By similarity).</text>
</comment>
<comment type="cofactor">
    <cofactor evidence="1">
        <name>Mg(2+)</name>
        <dbReference type="ChEBI" id="CHEBI:18420"/>
    </cofactor>
</comment>
<comment type="similarity">
    <text evidence="1">Belongs to the PINc/VapC protein family.</text>
</comment>
<feature type="chain" id="PRO_0000428588" description="Ribonuclease VapC31">
    <location>
        <begin position="1"/>
        <end position="142"/>
    </location>
</feature>
<feature type="domain" description="PINc" evidence="1">
    <location>
        <begin position="3"/>
        <end position="139"/>
    </location>
</feature>
<feature type="binding site" evidence="1">
    <location>
        <position position="5"/>
    </location>
    <ligand>
        <name>Mg(2+)</name>
        <dbReference type="ChEBI" id="CHEBI:18420"/>
    </ligand>
</feature>
<feature type="binding site" evidence="1">
    <location>
        <position position="108"/>
    </location>
    <ligand>
        <name>Mg(2+)</name>
        <dbReference type="ChEBI" id="CHEBI:18420"/>
    </ligand>
</feature>
<gene>
    <name evidence="1" type="primary">vapC31</name>
    <name type="ordered locus">MT0773</name>
</gene>
<sequence>MFLLDANVLLAAHRGDHPNHRTVRPWFDRLLAADDPFTVPNLVWASFLRLATNRRIFEIPSPRAEAFAFVEAVTAQPHHLPTNPGPRHLMLLRKLCDEADASGDLIPDAVLAAIAVGHHCAVVSLDRDFARFASVRHIRPPL</sequence>
<accession>P9WF74</accession>
<accession>L0T6C8</accession>
<accession>O53812</accession>
<accession>Q7D9C4</accession>
<dbReference type="EC" id="3.1.-.-" evidence="1"/>
<dbReference type="EMBL" id="AE000516">
    <property type="protein sequence ID" value="AAK45013.1"/>
    <property type="molecule type" value="Genomic_DNA"/>
</dbReference>
<dbReference type="PIR" id="H70824">
    <property type="entry name" value="H70824"/>
</dbReference>
<dbReference type="RefSeq" id="WP_003403837.1">
    <property type="nucleotide sequence ID" value="NZ_KK341227.1"/>
</dbReference>
<dbReference type="SMR" id="P9WF74"/>
<dbReference type="KEGG" id="mtc:MT0773"/>
<dbReference type="PATRIC" id="fig|83331.31.peg.830"/>
<dbReference type="HOGENOM" id="CLU_146668_1_0_11"/>
<dbReference type="Proteomes" id="UP000001020">
    <property type="component" value="Chromosome"/>
</dbReference>
<dbReference type="GO" id="GO:0000287">
    <property type="term" value="F:magnesium ion binding"/>
    <property type="evidence" value="ECO:0007669"/>
    <property type="project" value="UniProtKB-UniRule"/>
</dbReference>
<dbReference type="GO" id="GO:0004540">
    <property type="term" value="F:RNA nuclease activity"/>
    <property type="evidence" value="ECO:0007669"/>
    <property type="project" value="InterPro"/>
</dbReference>
<dbReference type="GO" id="GO:0045926">
    <property type="term" value="P:negative regulation of growth"/>
    <property type="evidence" value="ECO:0007669"/>
    <property type="project" value="UniProtKB-ARBA"/>
</dbReference>
<dbReference type="CDD" id="cd18678">
    <property type="entry name" value="PIN_MtVapC25_VapC33-like"/>
    <property type="match status" value="1"/>
</dbReference>
<dbReference type="FunFam" id="3.40.50.1010:FF:000048">
    <property type="entry name" value="Ribonuclease VapC"/>
    <property type="match status" value="1"/>
</dbReference>
<dbReference type="Gene3D" id="3.40.50.1010">
    <property type="entry name" value="5'-nuclease"/>
    <property type="match status" value="1"/>
</dbReference>
<dbReference type="HAMAP" id="MF_00265">
    <property type="entry name" value="VapC_Nob1"/>
    <property type="match status" value="1"/>
</dbReference>
<dbReference type="InterPro" id="IPR006226">
    <property type="entry name" value="Mtu_PIN"/>
</dbReference>
<dbReference type="InterPro" id="IPR029060">
    <property type="entry name" value="PIN-like_dom_sf"/>
</dbReference>
<dbReference type="InterPro" id="IPR002716">
    <property type="entry name" value="PIN_dom"/>
</dbReference>
<dbReference type="InterPro" id="IPR022907">
    <property type="entry name" value="VapC_family"/>
</dbReference>
<dbReference type="NCBIfam" id="TIGR00028">
    <property type="entry name" value="Mtu_PIN_fam"/>
    <property type="match status" value="1"/>
</dbReference>
<dbReference type="Pfam" id="PF01850">
    <property type="entry name" value="PIN"/>
    <property type="match status" value="1"/>
</dbReference>
<dbReference type="SUPFAM" id="SSF88723">
    <property type="entry name" value="PIN domain-like"/>
    <property type="match status" value="1"/>
</dbReference>
<name>VPC31_MYCTO</name>
<protein>
    <recommendedName>
        <fullName evidence="1">Ribonuclease VapC31</fullName>
        <shortName evidence="1">RNase VapC31</shortName>
        <ecNumber evidence="1">3.1.-.-</ecNumber>
    </recommendedName>
    <alternativeName>
        <fullName evidence="1">Toxin VapC31</fullName>
    </alternativeName>
</protein>
<proteinExistence type="inferred from homology"/>
<keyword id="KW-0378">Hydrolase</keyword>
<keyword id="KW-0460">Magnesium</keyword>
<keyword id="KW-0479">Metal-binding</keyword>
<keyword id="KW-0540">Nuclease</keyword>
<keyword id="KW-1185">Reference proteome</keyword>
<keyword id="KW-1277">Toxin-antitoxin system</keyword>
<reference key="1">
    <citation type="journal article" date="2002" name="J. Bacteriol.">
        <title>Whole-genome comparison of Mycobacterium tuberculosis clinical and laboratory strains.</title>
        <authorList>
            <person name="Fleischmann R.D."/>
            <person name="Alland D."/>
            <person name="Eisen J.A."/>
            <person name="Carpenter L."/>
            <person name="White O."/>
            <person name="Peterson J.D."/>
            <person name="DeBoy R.T."/>
            <person name="Dodson R.J."/>
            <person name="Gwinn M.L."/>
            <person name="Haft D.H."/>
            <person name="Hickey E.K."/>
            <person name="Kolonay J.F."/>
            <person name="Nelson W.C."/>
            <person name="Umayam L.A."/>
            <person name="Ermolaeva M.D."/>
            <person name="Salzberg S.L."/>
            <person name="Delcher A."/>
            <person name="Utterback T.R."/>
            <person name="Weidman J.F."/>
            <person name="Khouri H.M."/>
            <person name="Gill J."/>
            <person name="Mikula A."/>
            <person name="Bishai W."/>
            <person name="Jacobs W.R. Jr."/>
            <person name="Venter J.C."/>
            <person name="Fraser C.M."/>
        </authorList>
    </citation>
    <scope>NUCLEOTIDE SEQUENCE [LARGE SCALE GENOMIC DNA]</scope>
    <source>
        <strain>CDC 1551 / Oshkosh</strain>
    </source>
</reference>
<evidence type="ECO:0000255" key="1">
    <source>
        <dbReference type="HAMAP-Rule" id="MF_00265"/>
    </source>
</evidence>
<organism>
    <name type="scientific">Mycobacterium tuberculosis (strain CDC 1551 / Oshkosh)</name>
    <dbReference type="NCBI Taxonomy" id="83331"/>
    <lineage>
        <taxon>Bacteria</taxon>
        <taxon>Bacillati</taxon>
        <taxon>Actinomycetota</taxon>
        <taxon>Actinomycetes</taxon>
        <taxon>Mycobacteriales</taxon>
        <taxon>Mycobacteriaceae</taxon>
        <taxon>Mycobacterium</taxon>
        <taxon>Mycobacterium tuberculosis complex</taxon>
    </lineage>
</organism>